<gene>
    <name evidence="1" type="primary">purR</name>
    <name type="ordered locus">PC1_2388</name>
</gene>
<sequence length="341" mass="37896">MATIKDVAKRAGVSTTTVSHVINKTRFVAEETKAAVRAAIKELHYSPSAVARSLKVNHTKSIGLLATSSEAPYFAEIIEAVENSCYAKGYTLVLCNSHNDIGKQRAYLSMLAQKRVDGLLVMCAEYPPELLAMLKDYRSIPMVVMDWGQMHSDFTDTIIDNAFEGGYMAGRYLIERGHRDIGAIPGIQERNTGSGRYLGFLKALKEADITVREEWVVQGDFEPESGYKAMHQILAQKQRPTAVFCGGDIMAMGAICAADELGLRVPQDISVIGYDNVRHARFFTPALTTIHQPKERLGQSAFAMLLDRITSKREDAHVIEVHPTLIERRSVADGPYLDYRR</sequence>
<evidence type="ECO:0000255" key="1">
    <source>
        <dbReference type="HAMAP-Rule" id="MF_01277"/>
    </source>
</evidence>
<proteinExistence type="inferred from homology"/>
<reference key="1">
    <citation type="submission" date="2009-07" db="EMBL/GenBank/DDBJ databases">
        <title>Complete sequence of Pectobacterium carotovorum subsp. carotovorum PC1.</title>
        <authorList>
            <consortium name="US DOE Joint Genome Institute"/>
            <person name="Lucas S."/>
            <person name="Copeland A."/>
            <person name="Lapidus A."/>
            <person name="Glavina del Rio T."/>
            <person name="Tice H."/>
            <person name="Bruce D."/>
            <person name="Goodwin L."/>
            <person name="Pitluck S."/>
            <person name="Munk A.C."/>
            <person name="Brettin T."/>
            <person name="Detter J.C."/>
            <person name="Han C."/>
            <person name="Tapia R."/>
            <person name="Larimer F."/>
            <person name="Land M."/>
            <person name="Hauser L."/>
            <person name="Kyrpides N."/>
            <person name="Mikhailova N."/>
            <person name="Balakrishnan V."/>
            <person name="Glasner J."/>
            <person name="Perna N.T."/>
        </authorList>
    </citation>
    <scope>NUCLEOTIDE SEQUENCE [LARGE SCALE GENOMIC DNA]</scope>
    <source>
        <strain>PC1</strain>
    </source>
</reference>
<accession>C6DK36</accession>
<comment type="function">
    <text evidence="1">Is the main repressor of the genes involved in the de novo synthesis of purine nucleotides, regulating purB, purC, purEK, purF, purHD, purL, purMN and guaBA expression. PurR is allosterically activated to bind its cognate DNA by binding the purine corepressors, hypoxanthine or guanine, thereby effecting transcription repression.</text>
</comment>
<comment type="pathway">
    <text>Purine metabolism; purine nucleotide biosynthesis [regulation].</text>
</comment>
<comment type="subunit">
    <text evidence="1">Homodimer.</text>
</comment>
<comment type="domain">
    <text evidence="1">Consists of two structural and functional domains: an N-terminal DNA-binding domain, approximately the first 60 residues, and a larger C-terminal domain, approximately 280 residues, which imparts the function of corepressor binding and oligomerization.</text>
</comment>
<name>PURR_PECCP</name>
<dbReference type="EMBL" id="CP001657">
    <property type="protein sequence ID" value="ACT13419.1"/>
    <property type="molecule type" value="Genomic_DNA"/>
</dbReference>
<dbReference type="RefSeq" id="WP_015840601.1">
    <property type="nucleotide sequence ID" value="NC_012917.1"/>
</dbReference>
<dbReference type="SMR" id="C6DK36"/>
<dbReference type="STRING" id="561230.PC1_2388"/>
<dbReference type="KEGG" id="pct:PC1_2388"/>
<dbReference type="eggNOG" id="COG1609">
    <property type="taxonomic scope" value="Bacteria"/>
</dbReference>
<dbReference type="HOGENOM" id="CLU_037628_6_2_6"/>
<dbReference type="OrthoDB" id="9798934at2"/>
<dbReference type="UniPathway" id="UPA00488"/>
<dbReference type="Proteomes" id="UP000002736">
    <property type="component" value="Chromosome"/>
</dbReference>
<dbReference type="GO" id="GO:0003700">
    <property type="term" value="F:DNA-binding transcription factor activity"/>
    <property type="evidence" value="ECO:0007669"/>
    <property type="project" value="TreeGrafter"/>
</dbReference>
<dbReference type="GO" id="GO:0000976">
    <property type="term" value="F:transcription cis-regulatory region binding"/>
    <property type="evidence" value="ECO:0007669"/>
    <property type="project" value="TreeGrafter"/>
</dbReference>
<dbReference type="GO" id="GO:0045892">
    <property type="term" value="P:negative regulation of DNA-templated transcription"/>
    <property type="evidence" value="ECO:0007669"/>
    <property type="project" value="UniProtKB-UniRule"/>
</dbReference>
<dbReference type="GO" id="GO:0006164">
    <property type="term" value="P:purine nucleotide biosynthetic process"/>
    <property type="evidence" value="ECO:0007669"/>
    <property type="project" value="UniProtKB-UniPathway"/>
</dbReference>
<dbReference type="CDD" id="cd01392">
    <property type="entry name" value="HTH_LacI"/>
    <property type="match status" value="1"/>
</dbReference>
<dbReference type="CDD" id="cd06275">
    <property type="entry name" value="PBP1_PurR"/>
    <property type="match status" value="1"/>
</dbReference>
<dbReference type="FunFam" id="1.10.260.40:FF:000002">
    <property type="entry name" value="HTH-type transcriptional repressor PurR"/>
    <property type="match status" value="1"/>
</dbReference>
<dbReference type="FunFam" id="3.40.50.2300:FF:000045">
    <property type="entry name" value="HTH-type transcriptional repressor PurR"/>
    <property type="match status" value="1"/>
</dbReference>
<dbReference type="Gene3D" id="3.40.50.2300">
    <property type="match status" value="2"/>
</dbReference>
<dbReference type="Gene3D" id="1.10.260.40">
    <property type="entry name" value="lambda repressor-like DNA-binding domains"/>
    <property type="match status" value="1"/>
</dbReference>
<dbReference type="HAMAP" id="MF_01277">
    <property type="entry name" value="HTH_type_PurR"/>
    <property type="match status" value="1"/>
</dbReference>
<dbReference type="InterPro" id="IPR000843">
    <property type="entry name" value="HTH_LacI"/>
</dbReference>
<dbReference type="InterPro" id="IPR046335">
    <property type="entry name" value="LacI/GalR-like_sensor"/>
</dbReference>
<dbReference type="InterPro" id="IPR010982">
    <property type="entry name" value="Lambda_DNA-bd_dom_sf"/>
</dbReference>
<dbReference type="InterPro" id="IPR028082">
    <property type="entry name" value="Peripla_BP_I"/>
</dbReference>
<dbReference type="InterPro" id="IPR023588">
    <property type="entry name" value="Tscrpt_reg_HTH_PurR"/>
</dbReference>
<dbReference type="NCBIfam" id="NF007979">
    <property type="entry name" value="PRK10703.1"/>
    <property type="match status" value="1"/>
</dbReference>
<dbReference type="PANTHER" id="PTHR30146:SF148">
    <property type="entry name" value="HTH-TYPE TRANSCRIPTIONAL REPRESSOR PURR-RELATED"/>
    <property type="match status" value="1"/>
</dbReference>
<dbReference type="PANTHER" id="PTHR30146">
    <property type="entry name" value="LACI-RELATED TRANSCRIPTIONAL REPRESSOR"/>
    <property type="match status" value="1"/>
</dbReference>
<dbReference type="Pfam" id="PF00356">
    <property type="entry name" value="LacI"/>
    <property type="match status" value="1"/>
</dbReference>
<dbReference type="Pfam" id="PF13377">
    <property type="entry name" value="Peripla_BP_3"/>
    <property type="match status" value="1"/>
</dbReference>
<dbReference type="PRINTS" id="PR00036">
    <property type="entry name" value="HTHLACI"/>
</dbReference>
<dbReference type="SMART" id="SM00354">
    <property type="entry name" value="HTH_LACI"/>
    <property type="match status" value="1"/>
</dbReference>
<dbReference type="SUPFAM" id="SSF47413">
    <property type="entry name" value="lambda repressor-like DNA-binding domains"/>
    <property type="match status" value="1"/>
</dbReference>
<dbReference type="SUPFAM" id="SSF53822">
    <property type="entry name" value="Periplasmic binding protein-like I"/>
    <property type="match status" value="1"/>
</dbReference>
<dbReference type="PROSITE" id="PS00356">
    <property type="entry name" value="HTH_LACI_1"/>
    <property type="match status" value="1"/>
</dbReference>
<dbReference type="PROSITE" id="PS50932">
    <property type="entry name" value="HTH_LACI_2"/>
    <property type="match status" value="1"/>
</dbReference>
<keyword id="KW-0238">DNA-binding</keyword>
<keyword id="KW-0658">Purine biosynthesis</keyword>
<keyword id="KW-0678">Repressor</keyword>
<keyword id="KW-0804">Transcription</keyword>
<keyword id="KW-0805">Transcription regulation</keyword>
<protein>
    <recommendedName>
        <fullName evidence="1">HTH-type transcriptional repressor PurR</fullName>
    </recommendedName>
    <alternativeName>
        <fullName evidence="1">Pur regulon repressor</fullName>
    </alternativeName>
    <alternativeName>
        <fullName evidence="1">Purine nucleotide synthesis repressor</fullName>
    </alternativeName>
</protein>
<organism>
    <name type="scientific">Pectobacterium carotovorum subsp. carotovorum (strain PC1)</name>
    <dbReference type="NCBI Taxonomy" id="561230"/>
    <lineage>
        <taxon>Bacteria</taxon>
        <taxon>Pseudomonadati</taxon>
        <taxon>Pseudomonadota</taxon>
        <taxon>Gammaproteobacteria</taxon>
        <taxon>Enterobacterales</taxon>
        <taxon>Pectobacteriaceae</taxon>
        <taxon>Pectobacterium</taxon>
    </lineage>
</organism>
<feature type="chain" id="PRO_1000214201" description="HTH-type transcriptional repressor PurR">
    <location>
        <begin position="1"/>
        <end position="341"/>
    </location>
</feature>
<feature type="domain" description="HTH lacI-type" evidence="1">
    <location>
        <begin position="2"/>
        <end position="56"/>
    </location>
</feature>
<feature type="DNA-binding region" description="H-T-H motif" evidence="1">
    <location>
        <begin position="4"/>
        <end position="23"/>
    </location>
</feature>
<feature type="DNA-binding region" evidence="1">
    <location>
        <begin position="48"/>
        <end position="56"/>
    </location>
</feature>
<feature type="binding site" evidence="1">
    <location>
        <position position="73"/>
    </location>
    <ligand>
        <name>hypoxanthine</name>
        <dbReference type="ChEBI" id="CHEBI:17368"/>
    </ligand>
</feature>
<feature type="binding site" evidence="1">
    <location>
        <position position="190"/>
    </location>
    <ligand>
        <name>hypoxanthine</name>
        <dbReference type="ChEBI" id="CHEBI:17368"/>
    </ligand>
</feature>
<feature type="binding site" evidence="1">
    <location>
        <position position="192"/>
    </location>
    <ligand>
        <name>hypoxanthine</name>
        <dbReference type="ChEBI" id="CHEBI:17368"/>
    </ligand>
</feature>
<feature type="binding site" evidence="1">
    <location>
        <position position="221"/>
    </location>
    <ligand>
        <name>hypoxanthine</name>
        <dbReference type="ChEBI" id="CHEBI:17368"/>
    </ligand>
</feature>
<feature type="binding site" evidence="1">
    <location>
        <position position="275"/>
    </location>
    <ligand>
        <name>hypoxanthine</name>
        <dbReference type="ChEBI" id="CHEBI:17368"/>
    </ligand>
</feature>